<accession>Q31HG2</accession>
<protein>
    <recommendedName>
        <fullName evidence="1">Triosephosphate isomerase</fullName>
        <shortName evidence="1">TIM</shortName>
        <shortName evidence="1">TPI</shortName>
        <ecNumber evidence="1">5.3.1.1</ecNumber>
    </recommendedName>
    <alternativeName>
        <fullName evidence="1">Triose-phosphate isomerase</fullName>
    </alternativeName>
</protein>
<gene>
    <name evidence="1" type="primary">tpiA</name>
    <name type="ordered locus">Tcr_0815</name>
</gene>
<sequence length="253" mass="26617">MRQLFVAGNWKMHGDKASIKTLVTGLNAKADSVGDVLVAVCPPAIYLDYTKNCLMAGEIALGGQNMAIEPVQGAYTGETSASMLKDVGCQYVILGHSERRAIYGETDQDIAAKVKTALDSGLTPILCVGETLEERESGQLESVISQQLDAVISEVGIDQFADVVIAYEPVWAIGTGKTASAQQAQDVHAFIRGQLAKLNPSVAEKVIIQYGGSVKPNNASELFSQPDIDGGLIGGASLNADDFIAICQAAGEQ</sequence>
<evidence type="ECO:0000255" key="1">
    <source>
        <dbReference type="HAMAP-Rule" id="MF_00147"/>
    </source>
</evidence>
<feature type="chain" id="PRO_0000307592" description="Triosephosphate isomerase">
    <location>
        <begin position="1"/>
        <end position="253"/>
    </location>
</feature>
<feature type="active site" description="Electrophile" evidence="1">
    <location>
        <position position="96"/>
    </location>
</feature>
<feature type="active site" description="Proton acceptor" evidence="1">
    <location>
        <position position="168"/>
    </location>
</feature>
<feature type="binding site" evidence="1">
    <location>
        <begin position="9"/>
        <end position="11"/>
    </location>
    <ligand>
        <name>substrate</name>
    </ligand>
</feature>
<feature type="binding site" evidence="1">
    <location>
        <position position="174"/>
    </location>
    <ligand>
        <name>substrate</name>
    </ligand>
</feature>
<feature type="binding site" evidence="1">
    <location>
        <position position="213"/>
    </location>
    <ligand>
        <name>substrate</name>
    </ligand>
</feature>
<feature type="binding site" evidence="1">
    <location>
        <begin position="234"/>
        <end position="235"/>
    </location>
    <ligand>
        <name>substrate</name>
    </ligand>
</feature>
<dbReference type="EC" id="5.3.1.1" evidence="1"/>
<dbReference type="EMBL" id="CP000109">
    <property type="protein sequence ID" value="ABB41411.1"/>
    <property type="molecule type" value="Genomic_DNA"/>
</dbReference>
<dbReference type="SMR" id="Q31HG2"/>
<dbReference type="STRING" id="317025.Tcr_0815"/>
<dbReference type="KEGG" id="tcx:Tcr_0815"/>
<dbReference type="eggNOG" id="COG0149">
    <property type="taxonomic scope" value="Bacteria"/>
</dbReference>
<dbReference type="HOGENOM" id="CLU_024251_2_3_6"/>
<dbReference type="OrthoDB" id="9809429at2"/>
<dbReference type="UniPathway" id="UPA00109">
    <property type="reaction ID" value="UER00189"/>
</dbReference>
<dbReference type="UniPathway" id="UPA00138"/>
<dbReference type="GO" id="GO:0005829">
    <property type="term" value="C:cytosol"/>
    <property type="evidence" value="ECO:0007669"/>
    <property type="project" value="TreeGrafter"/>
</dbReference>
<dbReference type="GO" id="GO:0004807">
    <property type="term" value="F:triose-phosphate isomerase activity"/>
    <property type="evidence" value="ECO:0007669"/>
    <property type="project" value="UniProtKB-UniRule"/>
</dbReference>
<dbReference type="GO" id="GO:0006094">
    <property type="term" value="P:gluconeogenesis"/>
    <property type="evidence" value="ECO:0007669"/>
    <property type="project" value="UniProtKB-UniRule"/>
</dbReference>
<dbReference type="GO" id="GO:0046166">
    <property type="term" value="P:glyceraldehyde-3-phosphate biosynthetic process"/>
    <property type="evidence" value="ECO:0007669"/>
    <property type="project" value="TreeGrafter"/>
</dbReference>
<dbReference type="GO" id="GO:0019563">
    <property type="term" value="P:glycerol catabolic process"/>
    <property type="evidence" value="ECO:0007669"/>
    <property type="project" value="TreeGrafter"/>
</dbReference>
<dbReference type="GO" id="GO:0006096">
    <property type="term" value="P:glycolytic process"/>
    <property type="evidence" value="ECO:0007669"/>
    <property type="project" value="UniProtKB-UniRule"/>
</dbReference>
<dbReference type="CDD" id="cd00311">
    <property type="entry name" value="TIM"/>
    <property type="match status" value="1"/>
</dbReference>
<dbReference type="FunFam" id="3.20.20.70:FF:000020">
    <property type="entry name" value="Triosephosphate isomerase"/>
    <property type="match status" value="1"/>
</dbReference>
<dbReference type="Gene3D" id="3.20.20.70">
    <property type="entry name" value="Aldolase class I"/>
    <property type="match status" value="1"/>
</dbReference>
<dbReference type="HAMAP" id="MF_00147_B">
    <property type="entry name" value="TIM_B"/>
    <property type="match status" value="1"/>
</dbReference>
<dbReference type="InterPro" id="IPR013785">
    <property type="entry name" value="Aldolase_TIM"/>
</dbReference>
<dbReference type="InterPro" id="IPR035990">
    <property type="entry name" value="TIM_sf"/>
</dbReference>
<dbReference type="InterPro" id="IPR022896">
    <property type="entry name" value="TrioseP_Isoase_bac/euk"/>
</dbReference>
<dbReference type="InterPro" id="IPR000652">
    <property type="entry name" value="Triosephosphate_isomerase"/>
</dbReference>
<dbReference type="InterPro" id="IPR020861">
    <property type="entry name" value="Triosephosphate_isomerase_AS"/>
</dbReference>
<dbReference type="NCBIfam" id="TIGR00419">
    <property type="entry name" value="tim"/>
    <property type="match status" value="1"/>
</dbReference>
<dbReference type="PANTHER" id="PTHR21139">
    <property type="entry name" value="TRIOSEPHOSPHATE ISOMERASE"/>
    <property type="match status" value="1"/>
</dbReference>
<dbReference type="PANTHER" id="PTHR21139:SF42">
    <property type="entry name" value="TRIOSEPHOSPHATE ISOMERASE"/>
    <property type="match status" value="1"/>
</dbReference>
<dbReference type="Pfam" id="PF00121">
    <property type="entry name" value="TIM"/>
    <property type="match status" value="1"/>
</dbReference>
<dbReference type="SUPFAM" id="SSF51351">
    <property type="entry name" value="Triosephosphate isomerase (TIM)"/>
    <property type="match status" value="1"/>
</dbReference>
<dbReference type="PROSITE" id="PS00171">
    <property type="entry name" value="TIM_1"/>
    <property type="match status" value="1"/>
</dbReference>
<dbReference type="PROSITE" id="PS51440">
    <property type="entry name" value="TIM_2"/>
    <property type="match status" value="1"/>
</dbReference>
<organism>
    <name type="scientific">Hydrogenovibrio crunogenus (strain DSM 25203 / XCL-2)</name>
    <name type="common">Thiomicrospira crunogena</name>
    <dbReference type="NCBI Taxonomy" id="317025"/>
    <lineage>
        <taxon>Bacteria</taxon>
        <taxon>Pseudomonadati</taxon>
        <taxon>Pseudomonadota</taxon>
        <taxon>Gammaproteobacteria</taxon>
        <taxon>Thiotrichales</taxon>
        <taxon>Piscirickettsiaceae</taxon>
        <taxon>Hydrogenovibrio</taxon>
    </lineage>
</organism>
<reference key="1">
    <citation type="journal article" date="2006" name="PLoS Biol.">
        <title>The genome of deep-sea vent chemolithoautotroph Thiomicrospira crunogena XCL-2.</title>
        <authorList>
            <person name="Scott K.M."/>
            <person name="Sievert S.M."/>
            <person name="Abril F.N."/>
            <person name="Ball L.A."/>
            <person name="Barrett C.J."/>
            <person name="Blake R.A."/>
            <person name="Boller A.J."/>
            <person name="Chain P.S.G."/>
            <person name="Clark J.A."/>
            <person name="Davis C.R."/>
            <person name="Detter C."/>
            <person name="Do K.F."/>
            <person name="Dobrinski K.P."/>
            <person name="Faza B.I."/>
            <person name="Fitzpatrick K.A."/>
            <person name="Freyermuth S.K."/>
            <person name="Harmer T.L."/>
            <person name="Hauser L.J."/>
            <person name="Huegler M."/>
            <person name="Kerfeld C.A."/>
            <person name="Klotz M.G."/>
            <person name="Kong W.W."/>
            <person name="Land M."/>
            <person name="Lapidus A."/>
            <person name="Larimer F.W."/>
            <person name="Longo D.L."/>
            <person name="Lucas S."/>
            <person name="Malfatti S.A."/>
            <person name="Massey S.E."/>
            <person name="Martin D.D."/>
            <person name="McCuddin Z."/>
            <person name="Meyer F."/>
            <person name="Moore J.L."/>
            <person name="Ocampo L.H. Jr."/>
            <person name="Paul J.H."/>
            <person name="Paulsen I.T."/>
            <person name="Reep D.K."/>
            <person name="Ren Q."/>
            <person name="Ross R.L."/>
            <person name="Sato P.Y."/>
            <person name="Thomas P."/>
            <person name="Tinkham L.E."/>
            <person name="Zeruth G.T."/>
        </authorList>
    </citation>
    <scope>NUCLEOTIDE SEQUENCE [LARGE SCALE GENOMIC DNA]</scope>
    <source>
        <strain>DSM 25203 / XCL-2</strain>
    </source>
</reference>
<comment type="function">
    <text evidence="1">Involved in the gluconeogenesis. Catalyzes stereospecifically the conversion of dihydroxyacetone phosphate (DHAP) to D-glyceraldehyde-3-phosphate (G3P).</text>
</comment>
<comment type="catalytic activity">
    <reaction evidence="1">
        <text>D-glyceraldehyde 3-phosphate = dihydroxyacetone phosphate</text>
        <dbReference type="Rhea" id="RHEA:18585"/>
        <dbReference type="ChEBI" id="CHEBI:57642"/>
        <dbReference type="ChEBI" id="CHEBI:59776"/>
        <dbReference type="EC" id="5.3.1.1"/>
    </reaction>
</comment>
<comment type="pathway">
    <text evidence="1">Carbohydrate biosynthesis; gluconeogenesis.</text>
</comment>
<comment type="pathway">
    <text evidence="1">Carbohydrate degradation; glycolysis; D-glyceraldehyde 3-phosphate from glycerone phosphate: step 1/1.</text>
</comment>
<comment type="subunit">
    <text evidence="1">Homodimer.</text>
</comment>
<comment type="subcellular location">
    <subcellularLocation>
        <location evidence="1">Cytoplasm</location>
    </subcellularLocation>
</comment>
<comment type="similarity">
    <text evidence="1">Belongs to the triosephosphate isomerase family.</text>
</comment>
<proteinExistence type="inferred from homology"/>
<keyword id="KW-0963">Cytoplasm</keyword>
<keyword id="KW-0312">Gluconeogenesis</keyword>
<keyword id="KW-0324">Glycolysis</keyword>
<keyword id="KW-0413">Isomerase</keyword>
<name>TPIS_HYDCU</name>